<accession>B2UZK0</accession>
<organism>
    <name type="scientific">Clostridium botulinum (strain Alaska E43 / Type E3)</name>
    <dbReference type="NCBI Taxonomy" id="508767"/>
    <lineage>
        <taxon>Bacteria</taxon>
        <taxon>Bacillati</taxon>
        <taxon>Bacillota</taxon>
        <taxon>Clostridia</taxon>
        <taxon>Eubacteriales</taxon>
        <taxon>Clostridiaceae</taxon>
        <taxon>Clostridium</taxon>
    </lineage>
</organism>
<evidence type="ECO:0000255" key="1">
    <source>
        <dbReference type="HAMAP-Rule" id="MF_01347"/>
    </source>
</evidence>
<dbReference type="EC" id="7.1.2.2" evidence="1"/>
<dbReference type="EMBL" id="CP001078">
    <property type="protein sequence ID" value="ACD53245.1"/>
    <property type="molecule type" value="Genomic_DNA"/>
</dbReference>
<dbReference type="RefSeq" id="WP_003373604.1">
    <property type="nucleotide sequence ID" value="NC_010723.1"/>
</dbReference>
<dbReference type="SMR" id="B2UZK0"/>
<dbReference type="KEGG" id="cbt:CLH_0490"/>
<dbReference type="HOGENOM" id="CLU_022398_0_2_9"/>
<dbReference type="GO" id="GO:0005886">
    <property type="term" value="C:plasma membrane"/>
    <property type="evidence" value="ECO:0007669"/>
    <property type="project" value="UniProtKB-SubCell"/>
</dbReference>
<dbReference type="GO" id="GO:0045259">
    <property type="term" value="C:proton-transporting ATP synthase complex"/>
    <property type="evidence" value="ECO:0007669"/>
    <property type="project" value="UniProtKB-KW"/>
</dbReference>
<dbReference type="GO" id="GO:0005524">
    <property type="term" value="F:ATP binding"/>
    <property type="evidence" value="ECO:0007669"/>
    <property type="project" value="UniProtKB-UniRule"/>
</dbReference>
<dbReference type="GO" id="GO:0016887">
    <property type="term" value="F:ATP hydrolysis activity"/>
    <property type="evidence" value="ECO:0007669"/>
    <property type="project" value="InterPro"/>
</dbReference>
<dbReference type="GO" id="GO:0046933">
    <property type="term" value="F:proton-transporting ATP synthase activity, rotational mechanism"/>
    <property type="evidence" value="ECO:0007669"/>
    <property type="project" value="UniProtKB-UniRule"/>
</dbReference>
<dbReference type="CDD" id="cd18110">
    <property type="entry name" value="ATP-synt_F1_beta_C"/>
    <property type="match status" value="1"/>
</dbReference>
<dbReference type="CDD" id="cd18115">
    <property type="entry name" value="ATP-synt_F1_beta_N"/>
    <property type="match status" value="1"/>
</dbReference>
<dbReference type="CDD" id="cd01133">
    <property type="entry name" value="F1-ATPase_beta_CD"/>
    <property type="match status" value="1"/>
</dbReference>
<dbReference type="FunFam" id="1.10.1140.10:FF:000001">
    <property type="entry name" value="ATP synthase subunit beta"/>
    <property type="match status" value="1"/>
</dbReference>
<dbReference type="FunFam" id="3.40.50.300:FF:000026">
    <property type="entry name" value="ATP synthase subunit beta"/>
    <property type="match status" value="1"/>
</dbReference>
<dbReference type="Gene3D" id="2.40.10.170">
    <property type="match status" value="1"/>
</dbReference>
<dbReference type="Gene3D" id="1.10.1140.10">
    <property type="entry name" value="Bovine Mitochondrial F1-atpase, Atp Synthase Beta Chain, Chain D, domain 3"/>
    <property type="match status" value="1"/>
</dbReference>
<dbReference type="Gene3D" id="3.40.50.300">
    <property type="entry name" value="P-loop containing nucleotide triphosphate hydrolases"/>
    <property type="match status" value="1"/>
</dbReference>
<dbReference type="HAMAP" id="MF_01347">
    <property type="entry name" value="ATP_synth_beta_bact"/>
    <property type="match status" value="1"/>
</dbReference>
<dbReference type="InterPro" id="IPR003593">
    <property type="entry name" value="AAA+_ATPase"/>
</dbReference>
<dbReference type="InterPro" id="IPR055190">
    <property type="entry name" value="ATP-synt_VA_C"/>
</dbReference>
<dbReference type="InterPro" id="IPR005722">
    <property type="entry name" value="ATP_synth_F1_bsu"/>
</dbReference>
<dbReference type="InterPro" id="IPR020003">
    <property type="entry name" value="ATPase_a/bsu_AS"/>
</dbReference>
<dbReference type="InterPro" id="IPR050053">
    <property type="entry name" value="ATPase_alpha/beta_chains"/>
</dbReference>
<dbReference type="InterPro" id="IPR004100">
    <property type="entry name" value="ATPase_F1/V1/A1_a/bsu_N"/>
</dbReference>
<dbReference type="InterPro" id="IPR036121">
    <property type="entry name" value="ATPase_F1/V1/A1_a/bsu_N_sf"/>
</dbReference>
<dbReference type="InterPro" id="IPR000194">
    <property type="entry name" value="ATPase_F1/V1/A1_a/bsu_nucl-bd"/>
</dbReference>
<dbReference type="InterPro" id="IPR024034">
    <property type="entry name" value="ATPase_F1/V1_b/a_C"/>
</dbReference>
<dbReference type="InterPro" id="IPR027417">
    <property type="entry name" value="P-loop_NTPase"/>
</dbReference>
<dbReference type="NCBIfam" id="TIGR01039">
    <property type="entry name" value="atpD"/>
    <property type="match status" value="1"/>
</dbReference>
<dbReference type="PANTHER" id="PTHR15184">
    <property type="entry name" value="ATP SYNTHASE"/>
    <property type="match status" value="1"/>
</dbReference>
<dbReference type="PANTHER" id="PTHR15184:SF71">
    <property type="entry name" value="ATP SYNTHASE SUBUNIT BETA, MITOCHONDRIAL"/>
    <property type="match status" value="1"/>
</dbReference>
<dbReference type="Pfam" id="PF00006">
    <property type="entry name" value="ATP-synt_ab"/>
    <property type="match status" value="1"/>
</dbReference>
<dbReference type="Pfam" id="PF02874">
    <property type="entry name" value="ATP-synt_ab_N"/>
    <property type="match status" value="1"/>
</dbReference>
<dbReference type="Pfam" id="PF22919">
    <property type="entry name" value="ATP-synt_VA_C"/>
    <property type="match status" value="1"/>
</dbReference>
<dbReference type="SMART" id="SM00382">
    <property type="entry name" value="AAA"/>
    <property type="match status" value="1"/>
</dbReference>
<dbReference type="SUPFAM" id="SSF47917">
    <property type="entry name" value="C-terminal domain of alpha and beta subunits of F1 ATP synthase"/>
    <property type="match status" value="1"/>
</dbReference>
<dbReference type="SUPFAM" id="SSF50615">
    <property type="entry name" value="N-terminal domain of alpha and beta subunits of F1 ATP synthase"/>
    <property type="match status" value="1"/>
</dbReference>
<dbReference type="SUPFAM" id="SSF52540">
    <property type="entry name" value="P-loop containing nucleoside triphosphate hydrolases"/>
    <property type="match status" value="1"/>
</dbReference>
<dbReference type="PROSITE" id="PS00152">
    <property type="entry name" value="ATPASE_ALPHA_BETA"/>
    <property type="match status" value="1"/>
</dbReference>
<protein>
    <recommendedName>
        <fullName evidence="1">ATP synthase subunit beta</fullName>
        <ecNumber evidence="1">7.1.2.2</ecNumber>
    </recommendedName>
    <alternativeName>
        <fullName evidence="1">ATP synthase F1 sector subunit beta</fullName>
    </alternativeName>
    <alternativeName>
        <fullName evidence="1">F-ATPase subunit beta</fullName>
    </alternativeName>
</protein>
<gene>
    <name evidence="1" type="primary">atpD</name>
    <name type="ordered locus">CLH_0490</name>
</gene>
<proteinExistence type="inferred from homology"/>
<comment type="function">
    <text evidence="1">Produces ATP from ADP in the presence of a proton gradient across the membrane. The catalytic sites are hosted primarily by the beta subunits.</text>
</comment>
<comment type="catalytic activity">
    <reaction evidence="1">
        <text>ATP + H2O + 4 H(+)(in) = ADP + phosphate + 5 H(+)(out)</text>
        <dbReference type="Rhea" id="RHEA:57720"/>
        <dbReference type="ChEBI" id="CHEBI:15377"/>
        <dbReference type="ChEBI" id="CHEBI:15378"/>
        <dbReference type="ChEBI" id="CHEBI:30616"/>
        <dbReference type="ChEBI" id="CHEBI:43474"/>
        <dbReference type="ChEBI" id="CHEBI:456216"/>
        <dbReference type="EC" id="7.1.2.2"/>
    </reaction>
</comment>
<comment type="subunit">
    <text evidence="1">F-type ATPases have 2 components, CF(1) - the catalytic core - and CF(0) - the membrane proton channel. CF(1) has five subunits: alpha(3), beta(3), gamma(1), delta(1), epsilon(1). CF(0) has three main subunits: a(1), b(2) and c(9-12). The alpha and beta chains form an alternating ring which encloses part of the gamma chain. CF(1) is attached to CF(0) by a central stalk formed by the gamma and epsilon chains, while a peripheral stalk is formed by the delta and b chains.</text>
</comment>
<comment type="subcellular location">
    <subcellularLocation>
        <location evidence="1">Cell membrane</location>
        <topology evidence="1">Peripheral membrane protein</topology>
    </subcellularLocation>
</comment>
<comment type="similarity">
    <text evidence="1">Belongs to the ATPase alpha/beta chains family.</text>
</comment>
<reference key="1">
    <citation type="submission" date="2008-05" db="EMBL/GenBank/DDBJ databases">
        <title>Complete genome sequence of Clostridium botulinum E3 str. Alaska E43.</title>
        <authorList>
            <person name="Brinkac L.M."/>
            <person name="Brown J.L."/>
            <person name="Bruce D."/>
            <person name="Detter C."/>
            <person name="Munk C."/>
            <person name="Smith L.A."/>
            <person name="Smith T.J."/>
            <person name="Sutton G."/>
            <person name="Brettin T.S."/>
        </authorList>
    </citation>
    <scope>NUCLEOTIDE SEQUENCE [LARGE SCALE GENOMIC DNA]</scope>
    <source>
        <strain>Alaska E43 / Type E3</strain>
    </source>
</reference>
<name>ATPB_CLOBA</name>
<keyword id="KW-0066">ATP synthesis</keyword>
<keyword id="KW-0067">ATP-binding</keyword>
<keyword id="KW-1003">Cell membrane</keyword>
<keyword id="KW-0139">CF(1)</keyword>
<keyword id="KW-0375">Hydrogen ion transport</keyword>
<keyword id="KW-0406">Ion transport</keyword>
<keyword id="KW-0472">Membrane</keyword>
<keyword id="KW-0547">Nucleotide-binding</keyword>
<keyword id="KW-1278">Translocase</keyword>
<keyword id="KW-0813">Transport</keyword>
<sequence length="463" mass="50327">MPGKIGKVVQVIGPVVDIKFDSDSLPNLYNAISIDMGERTLIAEVEQHVGDDIVRTIAMEATEGLKRGMDAVDTEKAISVPVGDKVLGRLFNVLGKPIDNAGEVEAEEIYPIHRPAPSFKDQAVEPEMFETGIKVIDLLAPYQRGGKIGLFGGAGVGKTVLIQELINNIAKEHGGLSVFTGVGERSREGNDLYHEMRESGVIDKTALVFGQMNEPPGARMRVALTGLTMAEYFRDKGQDVLLFIDNIFRFTQAGSEVSALLGRIPSAVGYQPTLATEMGALQERITSTKNGSITSVQAVYVPADDLTDPAPATTFSHLDATTVLSRSIVELGIYPAVDPLESSSRILDPRLVGEEHYNVATKVKNILERYKELQDIIAILGVDELSDEDKAVVSRARKVQRFLSQPFTVGEQFTGMPGKYVSVKETIKGFKEILEGKYDDLPESAFLFIGSVEEAVQKAKSLA</sequence>
<feature type="chain" id="PRO_1000143487" description="ATP synthase subunit beta">
    <location>
        <begin position="1"/>
        <end position="463"/>
    </location>
</feature>
<feature type="binding site" evidence="1">
    <location>
        <begin position="152"/>
        <end position="159"/>
    </location>
    <ligand>
        <name>ATP</name>
        <dbReference type="ChEBI" id="CHEBI:30616"/>
    </ligand>
</feature>